<feature type="chain" id="PRO_1000062788" description="Undecaprenyl-diphosphatase">
    <location>
        <begin position="1"/>
        <end position="276"/>
    </location>
</feature>
<feature type="transmembrane region" description="Helical" evidence="1">
    <location>
        <begin position="85"/>
        <end position="105"/>
    </location>
</feature>
<feature type="transmembrane region" description="Helical" evidence="1">
    <location>
        <begin position="108"/>
        <end position="128"/>
    </location>
</feature>
<feature type="transmembrane region" description="Helical" evidence="1">
    <location>
        <begin position="187"/>
        <end position="207"/>
    </location>
</feature>
<feature type="transmembrane region" description="Helical" evidence="1">
    <location>
        <begin position="217"/>
        <end position="237"/>
    </location>
</feature>
<feature type="transmembrane region" description="Helical" evidence="1">
    <location>
        <begin position="253"/>
        <end position="273"/>
    </location>
</feature>
<reference key="1">
    <citation type="journal article" date="2010" name="Genome Biol. Evol.">
        <title>Continuing evolution of Burkholderia mallei through genome reduction and large-scale rearrangements.</title>
        <authorList>
            <person name="Losada L."/>
            <person name="Ronning C.M."/>
            <person name="DeShazer D."/>
            <person name="Woods D."/>
            <person name="Fedorova N."/>
            <person name="Kim H.S."/>
            <person name="Shabalina S.A."/>
            <person name="Pearson T.R."/>
            <person name="Brinkac L."/>
            <person name="Tan P."/>
            <person name="Nandi T."/>
            <person name="Crabtree J."/>
            <person name="Badger J."/>
            <person name="Beckstrom-Sternberg S."/>
            <person name="Saqib M."/>
            <person name="Schutzer S.E."/>
            <person name="Keim P."/>
            <person name="Nierman W.C."/>
        </authorList>
    </citation>
    <scope>NUCLEOTIDE SEQUENCE [LARGE SCALE GENOMIC DNA]</scope>
    <source>
        <strain>NCTC 10247</strain>
    </source>
</reference>
<proteinExistence type="inferred from homology"/>
<evidence type="ECO:0000255" key="1">
    <source>
        <dbReference type="HAMAP-Rule" id="MF_01006"/>
    </source>
</evidence>
<keyword id="KW-0046">Antibiotic resistance</keyword>
<keyword id="KW-0997">Cell inner membrane</keyword>
<keyword id="KW-1003">Cell membrane</keyword>
<keyword id="KW-0133">Cell shape</keyword>
<keyword id="KW-0961">Cell wall biogenesis/degradation</keyword>
<keyword id="KW-0378">Hydrolase</keyword>
<keyword id="KW-0472">Membrane</keyword>
<keyword id="KW-0573">Peptidoglycan synthesis</keyword>
<keyword id="KW-0812">Transmembrane</keyword>
<keyword id="KW-1133">Transmembrane helix</keyword>
<organism>
    <name type="scientific">Burkholderia mallei (strain NCTC 10247)</name>
    <dbReference type="NCBI Taxonomy" id="320389"/>
    <lineage>
        <taxon>Bacteria</taxon>
        <taxon>Pseudomonadati</taxon>
        <taxon>Pseudomonadota</taxon>
        <taxon>Betaproteobacteria</taxon>
        <taxon>Burkholderiales</taxon>
        <taxon>Burkholderiaceae</taxon>
        <taxon>Burkholderia</taxon>
        <taxon>pseudomallei group</taxon>
    </lineage>
</organism>
<accession>A3MMT3</accession>
<sequence length="276" mass="30284">MDWILICKALALGIVEGLTEFLPVSSTGHLIVAGSFLRFHPEQAKTFDVVIQFGAILAVCWEYRRRIIDVVTGLPAQREARRFTMNVVIATVPAVALALLFEKTIKSVLFAPVPVAVALVVGGAAILWVEGRQRERSEPARVQSIDALTPFDALKVGLAQCCALIPGMSRSGSTIIGGMLFGLERRVATEFSFFLAIPVIFGATLYETAKDWRAFNVDSVGLFAIGLVAAFVSAFACVRWLLRYVASHDFTAFAWYRIAFGLFVLLVGYSGWIEWT</sequence>
<name>UPPP_BURM7</name>
<protein>
    <recommendedName>
        <fullName evidence="1">Undecaprenyl-diphosphatase</fullName>
        <ecNumber evidence="1">3.6.1.27</ecNumber>
    </recommendedName>
    <alternativeName>
        <fullName evidence="1">Bacitracin resistance protein</fullName>
    </alternativeName>
    <alternativeName>
        <fullName evidence="1">Undecaprenyl pyrophosphate phosphatase</fullName>
    </alternativeName>
</protein>
<gene>
    <name evidence="1" type="primary">uppP</name>
    <name type="ordered locus">BMA10247_2038</name>
</gene>
<comment type="function">
    <text evidence="1">Catalyzes the dephosphorylation of undecaprenyl diphosphate (UPP). Confers resistance to bacitracin.</text>
</comment>
<comment type="catalytic activity">
    <reaction evidence="1">
        <text>di-trans,octa-cis-undecaprenyl diphosphate + H2O = di-trans,octa-cis-undecaprenyl phosphate + phosphate + H(+)</text>
        <dbReference type="Rhea" id="RHEA:28094"/>
        <dbReference type="ChEBI" id="CHEBI:15377"/>
        <dbReference type="ChEBI" id="CHEBI:15378"/>
        <dbReference type="ChEBI" id="CHEBI:43474"/>
        <dbReference type="ChEBI" id="CHEBI:58405"/>
        <dbReference type="ChEBI" id="CHEBI:60392"/>
        <dbReference type="EC" id="3.6.1.27"/>
    </reaction>
</comment>
<comment type="subcellular location">
    <subcellularLocation>
        <location evidence="1">Cell inner membrane</location>
        <topology evidence="1">Multi-pass membrane protein</topology>
    </subcellularLocation>
</comment>
<comment type="miscellaneous">
    <text>Bacitracin is thought to be involved in the inhibition of peptidoglycan synthesis by sequestering undecaprenyl diphosphate, thereby reducing the pool of lipid carrier available.</text>
</comment>
<comment type="similarity">
    <text evidence="1">Belongs to the UppP family.</text>
</comment>
<dbReference type="EC" id="3.6.1.27" evidence="1"/>
<dbReference type="EMBL" id="CP000548">
    <property type="protein sequence ID" value="ABO05622.1"/>
    <property type="molecule type" value="Genomic_DNA"/>
</dbReference>
<dbReference type="RefSeq" id="WP_004185904.1">
    <property type="nucleotide sequence ID" value="NZ_CP007802.1"/>
</dbReference>
<dbReference type="SMR" id="A3MMT3"/>
<dbReference type="KEGG" id="bmaz:BM44_1186"/>
<dbReference type="KEGG" id="bmn:BMA10247_2038"/>
<dbReference type="PATRIC" id="fig|320389.8.peg.1325"/>
<dbReference type="GO" id="GO:0005886">
    <property type="term" value="C:plasma membrane"/>
    <property type="evidence" value="ECO:0007669"/>
    <property type="project" value="UniProtKB-SubCell"/>
</dbReference>
<dbReference type="GO" id="GO:0050380">
    <property type="term" value="F:undecaprenyl-diphosphatase activity"/>
    <property type="evidence" value="ECO:0007669"/>
    <property type="project" value="UniProtKB-UniRule"/>
</dbReference>
<dbReference type="GO" id="GO:0071555">
    <property type="term" value="P:cell wall organization"/>
    <property type="evidence" value="ECO:0007669"/>
    <property type="project" value="UniProtKB-KW"/>
</dbReference>
<dbReference type="GO" id="GO:0009252">
    <property type="term" value="P:peptidoglycan biosynthetic process"/>
    <property type="evidence" value="ECO:0007669"/>
    <property type="project" value="UniProtKB-KW"/>
</dbReference>
<dbReference type="GO" id="GO:0008360">
    <property type="term" value="P:regulation of cell shape"/>
    <property type="evidence" value="ECO:0007669"/>
    <property type="project" value="UniProtKB-KW"/>
</dbReference>
<dbReference type="GO" id="GO:0046677">
    <property type="term" value="P:response to antibiotic"/>
    <property type="evidence" value="ECO:0007669"/>
    <property type="project" value="UniProtKB-UniRule"/>
</dbReference>
<dbReference type="HAMAP" id="MF_01006">
    <property type="entry name" value="Undec_diphosphatase"/>
    <property type="match status" value="1"/>
</dbReference>
<dbReference type="InterPro" id="IPR003824">
    <property type="entry name" value="UppP"/>
</dbReference>
<dbReference type="NCBIfam" id="NF001389">
    <property type="entry name" value="PRK00281.1-2"/>
    <property type="match status" value="1"/>
</dbReference>
<dbReference type="NCBIfam" id="NF001390">
    <property type="entry name" value="PRK00281.1-4"/>
    <property type="match status" value="1"/>
</dbReference>
<dbReference type="NCBIfam" id="TIGR00753">
    <property type="entry name" value="undec_PP_bacA"/>
    <property type="match status" value="1"/>
</dbReference>
<dbReference type="PANTHER" id="PTHR30622">
    <property type="entry name" value="UNDECAPRENYL-DIPHOSPHATASE"/>
    <property type="match status" value="1"/>
</dbReference>
<dbReference type="PANTHER" id="PTHR30622:SF3">
    <property type="entry name" value="UNDECAPRENYL-DIPHOSPHATASE"/>
    <property type="match status" value="1"/>
</dbReference>
<dbReference type="Pfam" id="PF02673">
    <property type="entry name" value="BacA"/>
    <property type="match status" value="1"/>
</dbReference>